<comment type="catalytic activity">
    <reaction evidence="1">
        <text>2 reduced [2Fe-2S]-[ferredoxin] + NADP(+) + H(+) = 2 oxidized [2Fe-2S]-[ferredoxin] + NADPH</text>
        <dbReference type="Rhea" id="RHEA:20125"/>
        <dbReference type="Rhea" id="RHEA-COMP:10000"/>
        <dbReference type="Rhea" id="RHEA-COMP:10001"/>
        <dbReference type="ChEBI" id="CHEBI:15378"/>
        <dbReference type="ChEBI" id="CHEBI:33737"/>
        <dbReference type="ChEBI" id="CHEBI:33738"/>
        <dbReference type="ChEBI" id="CHEBI:57783"/>
        <dbReference type="ChEBI" id="CHEBI:58349"/>
        <dbReference type="EC" id="1.18.1.2"/>
    </reaction>
</comment>
<comment type="cofactor">
    <cofactor evidence="1">
        <name>FAD</name>
        <dbReference type="ChEBI" id="CHEBI:57692"/>
    </cofactor>
    <text evidence="1">Binds 1 FAD per subunit.</text>
</comment>
<comment type="subunit">
    <text evidence="1">Homodimer.</text>
</comment>
<comment type="similarity">
    <text evidence="1">Belongs to the ferredoxin--NADP reductase type 2 family.</text>
</comment>
<feature type="chain" id="PRO_0000364816" description="Ferredoxin--NADP reductase">
    <location>
        <begin position="1"/>
        <end position="356"/>
    </location>
</feature>
<feature type="binding site" evidence="1">
    <location>
        <position position="25"/>
    </location>
    <ligand>
        <name>FAD</name>
        <dbReference type="ChEBI" id="CHEBI:57692"/>
    </ligand>
</feature>
<feature type="binding site" evidence="1">
    <location>
        <position position="44"/>
    </location>
    <ligand>
        <name>FAD</name>
        <dbReference type="ChEBI" id="CHEBI:57692"/>
    </ligand>
</feature>
<feature type="binding site" evidence="1">
    <location>
        <position position="52"/>
    </location>
    <ligand>
        <name>FAD</name>
        <dbReference type="ChEBI" id="CHEBI:57692"/>
    </ligand>
</feature>
<feature type="binding site" evidence="1">
    <location>
        <position position="57"/>
    </location>
    <ligand>
        <name>FAD</name>
        <dbReference type="ChEBI" id="CHEBI:57692"/>
    </ligand>
</feature>
<feature type="binding site" evidence="1">
    <location>
        <position position="97"/>
    </location>
    <ligand>
        <name>FAD</name>
        <dbReference type="ChEBI" id="CHEBI:57692"/>
    </ligand>
</feature>
<feature type="binding site" evidence="1">
    <location>
        <position position="132"/>
    </location>
    <ligand>
        <name>FAD</name>
        <dbReference type="ChEBI" id="CHEBI:57692"/>
    </ligand>
</feature>
<feature type="binding site" evidence="1">
    <location>
        <position position="298"/>
    </location>
    <ligand>
        <name>FAD</name>
        <dbReference type="ChEBI" id="CHEBI:57692"/>
    </ligand>
</feature>
<feature type="binding site" evidence="1">
    <location>
        <position position="339"/>
    </location>
    <ligand>
        <name>FAD</name>
        <dbReference type="ChEBI" id="CHEBI:57692"/>
    </ligand>
</feature>
<name>FENR_CHLP8</name>
<keyword id="KW-0274">FAD</keyword>
<keyword id="KW-0285">Flavoprotein</keyword>
<keyword id="KW-0521">NADP</keyword>
<keyword id="KW-0560">Oxidoreductase</keyword>
<protein>
    <recommendedName>
        <fullName evidence="1">Ferredoxin--NADP reductase</fullName>
        <shortName evidence="1">FNR</shortName>
        <shortName evidence="1">Fd-NADP(+) reductase</shortName>
        <ecNumber evidence="1">1.18.1.2</ecNumber>
    </recommendedName>
</protein>
<evidence type="ECO:0000255" key="1">
    <source>
        <dbReference type="HAMAP-Rule" id="MF_01685"/>
    </source>
</evidence>
<dbReference type="EC" id="1.18.1.2" evidence="1"/>
<dbReference type="EMBL" id="CP001099">
    <property type="protein sequence ID" value="ACF12001.1"/>
    <property type="molecule type" value="Genomic_DNA"/>
</dbReference>
<dbReference type="RefSeq" id="WP_012502834.1">
    <property type="nucleotide sequence ID" value="NC_011027.1"/>
</dbReference>
<dbReference type="SMR" id="B3QPZ8"/>
<dbReference type="STRING" id="517417.Cpar_1603"/>
<dbReference type="KEGG" id="cpc:Cpar_1603"/>
<dbReference type="eggNOG" id="COG0492">
    <property type="taxonomic scope" value="Bacteria"/>
</dbReference>
<dbReference type="HOGENOM" id="CLU_031864_5_5_10"/>
<dbReference type="OrthoDB" id="9806179at2"/>
<dbReference type="Proteomes" id="UP000008811">
    <property type="component" value="Chromosome"/>
</dbReference>
<dbReference type="GO" id="GO:0004324">
    <property type="term" value="F:ferredoxin-NADP+ reductase activity"/>
    <property type="evidence" value="ECO:0007669"/>
    <property type="project" value="UniProtKB-UniRule"/>
</dbReference>
<dbReference type="GO" id="GO:0050660">
    <property type="term" value="F:flavin adenine dinucleotide binding"/>
    <property type="evidence" value="ECO:0007669"/>
    <property type="project" value="UniProtKB-UniRule"/>
</dbReference>
<dbReference type="GO" id="GO:0050661">
    <property type="term" value="F:NADP binding"/>
    <property type="evidence" value="ECO:0007669"/>
    <property type="project" value="UniProtKB-UniRule"/>
</dbReference>
<dbReference type="Gene3D" id="3.50.50.60">
    <property type="entry name" value="FAD/NAD(P)-binding domain"/>
    <property type="match status" value="2"/>
</dbReference>
<dbReference type="HAMAP" id="MF_01685">
    <property type="entry name" value="FENR2"/>
    <property type="match status" value="1"/>
</dbReference>
<dbReference type="InterPro" id="IPR036188">
    <property type="entry name" value="FAD/NAD-bd_sf"/>
</dbReference>
<dbReference type="InterPro" id="IPR023753">
    <property type="entry name" value="FAD/NAD-binding_dom"/>
</dbReference>
<dbReference type="InterPro" id="IPR022890">
    <property type="entry name" value="Fd--NADP_Rdtase_type_2"/>
</dbReference>
<dbReference type="InterPro" id="IPR050097">
    <property type="entry name" value="Ferredoxin-NADP_redctase_2"/>
</dbReference>
<dbReference type="PANTHER" id="PTHR48105">
    <property type="entry name" value="THIOREDOXIN REDUCTASE 1-RELATED-RELATED"/>
    <property type="match status" value="1"/>
</dbReference>
<dbReference type="Pfam" id="PF07992">
    <property type="entry name" value="Pyr_redox_2"/>
    <property type="match status" value="1"/>
</dbReference>
<dbReference type="PRINTS" id="PR00368">
    <property type="entry name" value="FADPNR"/>
</dbReference>
<dbReference type="PRINTS" id="PR00469">
    <property type="entry name" value="PNDRDTASEII"/>
</dbReference>
<dbReference type="SUPFAM" id="SSF51905">
    <property type="entry name" value="FAD/NAD(P)-binding domain"/>
    <property type="match status" value="1"/>
</dbReference>
<organism>
    <name type="scientific">Chlorobaculum parvum (strain DSM 263 / NCIMB 8327)</name>
    <name type="common">Chlorobium vibrioforme subsp. thiosulfatophilum</name>
    <dbReference type="NCBI Taxonomy" id="517417"/>
    <lineage>
        <taxon>Bacteria</taxon>
        <taxon>Pseudomonadati</taxon>
        <taxon>Chlorobiota</taxon>
        <taxon>Chlorobiia</taxon>
        <taxon>Chlorobiales</taxon>
        <taxon>Chlorobiaceae</taxon>
        <taxon>Chlorobaculum</taxon>
    </lineage>
</organism>
<sequence length="356" mass="38599">MLDIHNPTTDHQDIRDLTIIGGGPTGIFAAFQCGMNNISCRIIESMSQLGGQLAALYPEKHIYDVAGFPEVPAIDLVESLWAQAERYNPDVVLGEAVTKYTKLDDGTFETRTNAGNVYRSRAVLIAAGLGAFEPRKLPQLGNIDHLTGSSVYYAVKSVDNFKGKRVVIVGGGDSALDWTVGLLKNAESVTLVHRAKEFQGHGKTAHEVEQAKADGLIDVHLQTEVASIEESNGALTHVHLRSSNGEEWTVEADRLLILIGFKSNLGPLAGWDLELAENALVVDSHMKTSVDGLYAAGDIAHYPGKLKIIQTGLSEATMAVRHSLSYIKPGEKIRNVFSSVKMAKEKKAAEQEKKAE</sequence>
<gene>
    <name type="ordered locus">Cpar_1603</name>
</gene>
<accession>B3QPZ8</accession>
<proteinExistence type="inferred from homology"/>
<reference key="1">
    <citation type="submission" date="2008-06" db="EMBL/GenBank/DDBJ databases">
        <title>Complete sequence of Chlorobaculum parvum NCIB 8327.</title>
        <authorList>
            <consortium name="US DOE Joint Genome Institute"/>
            <person name="Lucas S."/>
            <person name="Copeland A."/>
            <person name="Lapidus A."/>
            <person name="Glavina del Rio T."/>
            <person name="Dalin E."/>
            <person name="Tice H."/>
            <person name="Bruce D."/>
            <person name="Goodwin L."/>
            <person name="Pitluck S."/>
            <person name="Schmutz J."/>
            <person name="Larimer F."/>
            <person name="Land M."/>
            <person name="Hauser L."/>
            <person name="Kyrpides N."/>
            <person name="Mikhailova N."/>
            <person name="Zhao F."/>
            <person name="Li T."/>
            <person name="Liu Z."/>
            <person name="Overmann J."/>
            <person name="Bryant D.A."/>
            <person name="Richardson P."/>
        </authorList>
    </citation>
    <scope>NUCLEOTIDE SEQUENCE [LARGE SCALE GENOMIC DNA]</scope>
    <source>
        <strain>DSM 263 / NCIMB 8327</strain>
    </source>
</reference>